<evidence type="ECO:0000250" key="1"/>
<evidence type="ECO:0000250" key="2">
    <source>
        <dbReference type="UniProtKB" id="Q9JM96"/>
    </source>
</evidence>
<evidence type="ECO:0000255" key="3">
    <source>
        <dbReference type="PROSITE-ProRule" id="PRU00057"/>
    </source>
</evidence>
<evidence type="ECO:0000256" key="4">
    <source>
        <dbReference type="SAM" id="MobiDB-lite"/>
    </source>
</evidence>
<evidence type="ECO:0000303" key="5">
    <source>
    </source>
</evidence>
<evidence type="ECO:0000305" key="6"/>
<evidence type="ECO:0007744" key="7">
    <source>
    </source>
</evidence>
<evidence type="ECO:0007744" key="8">
    <source>
    </source>
</evidence>
<evidence type="ECO:0007744" key="9">
    <source>
    </source>
</evidence>
<evidence type="ECO:0007744" key="10">
    <source>
    </source>
</evidence>
<evidence type="ECO:0007744" key="11">
    <source>
    </source>
</evidence>
<evidence type="ECO:0007744" key="12">
    <source>
    </source>
</evidence>
<reference key="1">
    <citation type="journal article" date="2000" name="J. Hum. Genet.">
        <title>Sequence analysis, gene expression, and chromosomal assignment of mouse Borg4 gene and its human orthologue.</title>
        <authorList>
            <person name="Osada N."/>
            <person name="Kusuda J."/>
            <person name="Suzuki Y."/>
            <person name="Sugano S."/>
            <person name="Hashimoto K."/>
        </authorList>
    </citation>
    <scope>NUCLEOTIDE SEQUENCE [MRNA] (ISOFORM 1)</scope>
    <source>
        <tissue>Ileal mucosa</tissue>
    </source>
</reference>
<reference key="2">
    <citation type="journal article" date="2001" name="J. Biol. Chem.">
        <title>A new family of Cdc42 effector proteins, CEPs, function in fibroblast and epithelial cell shape changes.</title>
        <authorList>
            <person name="Hirsch D.S."/>
            <person name="Pirone D.M."/>
            <person name="Burbelo P.D."/>
        </authorList>
    </citation>
    <scope>NUCLEOTIDE SEQUENCE [MRNA] (ISOFORM 1)</scope>
    <scope>CHARACTERIZATION</scope>
    <source>
        <tissue>Eye</tissue>
    </source>
</reference>
<reference key="3">
    <citation type="journal article" date="2004" name="Nat. Genet.">
        <title>Complete sequencing and characterization of 21,243 full-length human cDNAs.</title>
        <authorList>
            <person name="Ota T."/>
            <person name="Suzuki Y."/>
            <person name="Nishikawa T."/>
            <person name="Otsuki T."/>
            <person name="Sugiyama T."/>
            <person name="Irie R."/>
            <person name="Wakamatsu A."/>
            <person name="Hayashi K."/>
            <person name="Sato H."/>
            <person name="Nagai K."/>
            <person name="Kimura K."/>
            <person name="Makita H."/>
            <person name="Sekine M."/>
            <person name="Obayashi M."/>
            <person name="Nishi T."/>
            <person name="Shibahara T."/>
            <person name="Tanaka T."/>
            <person name="Ishii S."/>
            <person name="Yamamoto J."/>
            <person name="Saito K."/>
            <person name="Kawai Y."/>
            <person name="Isono Y."/>
            <person name="Nakamura Y."/>
            <person name="Nagahari K."/>
            <person name="Murakami K."/>
            <person name="Yasuda T."/>
            <person name="Iwayanagi T."/>
            <person name="Wagatsuma M."/>
            <person name="Shiratori A."/>
            <person name="Sudo H."/>
            <person name="Hosoiri T."/>
            <person name="Kaku Y."/>
            <person name="Kodaira H."/>
            <person name="Kondo H."/>
            <person name="Sugawara M."/>
            <person name="Takahashi M."/>
            <person name="Kanda K."/>
            <person name="Yokoi T."/>
            <person name="Furuya T."/>
            <person name="Kikkawa E."/>
            <person name="Omura Y."/>
            <person name="Abe K."/>
            <person name="Kamihara K."/>
            <person name="Katsuta N."/>
            <person name="Sato K."/>
            <person name="Tanikawa M."/>
            <person name="Yamazaki M."/>
            <person name="Ninomiya K."/>
            <person name="Ishibashi T."/>
            <person name="Yamashita H."/>
            <person name="Murakawa K."/>
            <person name="Fujimori K."/>
            <person name="Tanai H."/>
            <person name="Kimata M."/>
            <person name="Watanabe M."/>
            <person name="Hiraoka S."/>
            <person name="Chiba Y."/>
            <person name="Ishida S."/>
            <person name="Ono Y."/>
            <person name="Takiguchi S."/>
            <person name="Watanabe S."/>
            <person name="Yosida M."/>
            <person name="Hotuta T."/>
            <person name="Kusano J."/>
            <person name="Kanehori K."/>
            <person name="Takahashi-Fujii A."/>
            <person name="Hara H."/>
            <person name="Tanase T.-O."/>
            <person name="Nomura Y."/>
            <person name="Togiya S."/>
            <person name="Komai F."/>
            <person name="Hara R."/>
            <person name="Takeuchi K."/>
            <person name="Arita M."/>
            <person name="Imose N."/>
            <person name="Musashino K."/>
            <person name="Yuuki H."/>
            <person name="Oshima A."/>
            <person name="Sasaki N."/>
            <person name="Aotsuka S."/>
            <person name="Yoshikawa Y."/>
            <person name="Matsunawa H."/>
            <person name="Ichihara T."/>
            <person name="Shiohata N."/>
            <person name="Sano S."/>
            <person name="Moriya S."/>
            <person name="Momiyama H."/>
            <person name="Satoh N."/>
            <person name="Takami S."/>
            <person name="Terashima Y."/>
            <person name="Suzuki O."/>
            <person name="Nakagawa S."/>
            <person name="Senoh A."/>
            <person name="Mizoguchi H."/>
            <person name="Goto Y."/>
            <person name="Shimizu F."/>
            <person name="Wakebe H."/>
            <person name="Hishigaki H."/>
            <person name="Watanabe T."/>
            <person name="Sugiyama A."/>
            <person name="Takemoto M."/>
            <person name="Kawakami B."/>
            <person name="Yamazaki M."/>
            <person name="Watanabe K."/>
            <person name="Kumagai A."/>
            <person name="Itakura S."/>
            <person name="Fukuzumi Y."/>
            <person name="Fujimori Y."/>
            <person name="Komiyama M."/>
            <person name="Tashiro H."/>
            <person name="Tanigami A."/>
            <person name="Fujiwara T."/>
            <person name="Ono T."/>
            <person name="Yamada K."/>
            <person name="Fujii Y."/>
            <person name="Ozaki K."/>
            <person name="Hirao M."/>
            <person name="Ohmori Y."/>
            <person name="Kawabata A."/>
            <person name="Hikiji T."/>
            <person name="Kobatake N."/>
            <person name="Inagaki H."/>
            <person name="Ikema Y."/>
            <person name="Okamoto S."/>
            <person name="Okitani R."/>
            <person name="Kawakami T."/>
            <person name="Noguchi S."/>
            <person name="Itoh T."/>
            <person name="Shigeta K."/>
            <person name="Senba T."/>
            <person name="Matsumura K."/>
            <person name="Nakajima Y."/>
            <person name="Mizuno T."/>
            <person name="Morinaga M."/>
            <person name="Sasaki M."/>
            <person name="Togashi T."/>
            <person name="Oyama M."/>
            <person name="Hata H."/>
            <person name="Watanabe M."/>
            <person name="Komatsu T."/>
            <person name="Mizushima-Sugano J."/>
            <person name="Satoh T."/>
            <person name="Shirai Y."/>
            <person name="Takahashi Y."/>
            <person name="Nakagawa K."/>
            <person name="Okumura K."/>
            <person name="Nagase T."/>
            <person name="Nomura N."/>
            <person name="Kikuchi H."/>
            <person name="Masuho Y."/>
            <person name="Yamashita R."/>
            <person name="Nakai K."/>
            <person name="Yada T."/>
            <person name="Nakamura Y."/>
            <person name="Ohara O."/>
            <person name="Isogai T."/>
            <person name="Sugano S."/>
        </authorList>
    </citation>
    <scope>NUCLEOTIDE SEQUENCE [LARGE SCALE MRNA] (ISOFORM 2)</scope>
    <source>
        <tissue>Testis</tissue>
    </source>
</reference>
<reference key="4">
    <citation type="journal article" date="2006" name="Nature">
        <title>DNA sequence of human chromosome 17 and analysis of rearrangement in the human lineage.</title>
        <authorList>
            <person name="Zody M.C."/>
            <person name="Garber M."/>
            <person name="Adams D.J."/>
            <person name="Sharpe T."/>
            <person name="Harrow J."/>
            <person name="Lupski J.R."/>
            <person name="Nicholson C."/>
            <person name="Searle S.M."/>
            <person name="Wilming L."/>
            <person name="Young S.K."/>
            <person name="Abouelleil A."/>
            <person name="Allen N.R."/>
            <person name="Bi W."/>
            <person name="Bloom T."/>
            <person name="Borowsky M.L."/>
            <person name="Bugalter B.E."/>
            <person name="Butler J."/>
            <person name="Chang J.L."/>
            <person name="Chen C.-K."/>
            <person name="Cook A."/>
            <person name="Corum B."/>
            <person name="Cuomo C.A."/>
            <person name="de Jong P.J."/>
            <person name="DeCaprio D."/>
            <person name="Dewar K."/>
            <person name="FitzGerald M."/>
            <person name="Gilbert J."/>
            <person name="Gibson R."/>
            <person name="Gnerre S."/>
            <person name="Goldstein S."/>
            <person name="Grafham D.V."/>
            <person name="Grocock R."/>
            <person name="Hafez N."/>
            <person name="Hagopian D.S."/>
            <person name="Hart E."/>
            <person name="Norman C.H."/>
            <person name="Humphray S."/>
            <person name="Jaffe D.B."/>
            <person name="Jones M."/>
            <person name="Kamal M."/>
            <person name="Khodiyar V.K."/>
            <person name="LaButti K."/>
            <person name="Laird G."/>
            <person name="Lehoczky J."/>
            <person name="Liu X."/>
            <person name="Lokyitsang T."/>
            <person name="Loveland J."/>
            <person name="Lui A."/>
            <person name="Macdonald P."/>
            <person name="Major J.E."/>
            <person name="Matthews L."/>
            <person name="Mauceli E."/>
            <person name="McCarroll S.A."/>
            <person name="Mihalev A.H."/>
            <person name="Mudge J."/>
            <person name="Nguyen C."/>
            <person name="Nicol R."/>
            <person name="O'Leary S.B."/>
            <person name="Osoegawa K."/>
            <person name="Schwartz D.C."/>
            <person name="Shaw-Smith C."/>
            <person name="Stankiewicz P."/>
            <person name="Steward C."/>
            <person name="Swarbreck D."/>
            <person name="Venkataraman V."/>
            <person name="Whittaker C.A."/>
            <person name="Yang X."/>
            <person name="Zimmer A.R."/>
            <person name="Bradley A."/>
            <person name="Hubbard T."/>
            <person name="Birren B.W."/>
            <person name="Rogers J."/>
            <person name="Lander E.S."/>
            <person name="Nusbaum C."/>
        </authorList>
    </citation>
    <scope>NUCLEOTIDE SEQUENCE [LARGE SCALE GENOMIC DNA]</scope>
</reference>
<reference key="5">
    <citation type="journal article" date="2004" name="Genome Res.">
        <title>The status, quality, and expansion of the NIH full-length cDNA project: the Mammalian Gene Collection (MGC).</title>
        <authorList>
            <consortium name="The MGC Project Team"/>
        </authorList>
    </citation>
    <scope>NUCLEOTIDE SEQUENCE [LARGE SCALE MRNA] (ISOFORM 1)</scope>
    <source>
        <tissue>Brain</tissue>
        <tissue>Skin</tissue>
    </source>
</reference>
<reference key="6">
    <citation type="journal article" date="2006" name="Cell">
        <title>Global, in vivo, and site-specific phosphorylation dynamics in signaling networks.</title>
        <authorList>
            <person name="Olsen J.V."/>
            <person name="Blagoev B."/>
            <person name="Gnad F."/>
            <person name="Macek B."/>
            <person name="Kumar C."/>
            <person name="Mortensen P."/>
            <person name="Mann M."/>
        </authorList>
    </citation>
    <scope>PHOSPHORYLATION [LARGE SCALE ANALYSIS] AT SER-174; SER-292 AND SER-295</scope>
    <scope>IDENTIFICATION BY MASS SPECTROMETRY [LARGE SCALE ANALYSIS]</scope>
    <source>
        <tissue>Cervix carcinoma</tissue>
    </source>
</reference>
<reference key="7">
    <citation type="journal article" date="2008" name="Proc. Natl. Acad. Sci. U.S.A.">
        <title>A quantitative atlas of mitotic phosphorylation.</title>
        <authorList>
            <person name="Dephoure N."/>
            <person name="Zhou C."/>
            <person name="Villen J."/>
            <person name="Beausoleil S.A."/>
            <person name="Bakalarski C.E."/>
            <person name="Elledge S.J."/>
            <person name="Gygi S.P."/>
        </authorList>
    </citation>
    <scope>PHOSPHORYLATION [LARGE SCALE ANALYSIS] AT SER-64; SER-138; SER-174; SER-292 AND SER-295</scope>
    <scope>IDENTIFICATION BY MASS SPECTROMETRY [LARGE SCALE ANALYSIS]</scope>
    <source>
        <tissue>Cervix carcinoma</tissue>
    </source>
</reference>
<reference key="8">
    <citation type="journal article" date="2009" name="Anal. Chem.">
        <title>Lys-N and trypsin cover complementary parts of the phosphoproteome in a refined SCX-based approach.</title>
        <authorList>
            <person name="Gauci S."/>
            <person name="Helbig A.O."/>
            <person name="Slijper M."/>
            <person name="Krijgsveld J."/>
            <person name="Heck A.J."/>
            <person name="Mohammed S."/>
        </authorList>
    </citation>
    <scope>IDENTIFICATION BY MASS SPECTROMETRY [LARGE SCALE ANALYSIS]</scope>
</reference>
<reference key="9">
    <citation type="journal article" date="2009" name="Sci. Signal.">
        <title>Quantitative phosphoproteomic analysis of T cell receptor signaling reveals system-wide modulation of protein-protein interactions.</title>
        <authorList>
            <person name="Mayya V."/>
            <person name="Lundgren D.H."/>
            <person name="Hwang S.-I."/>
            <person name="Rezaul K."/>
            <person name="Wu L."/>
            <person name="Eng J.K."/>
            <person name="Rodionov V."/>
            <person name="Han D.K."/>
        </authorList>
    </citation>
    <scope>IDENTIFICATION BY MASS SPECTROMETRY [LARGE SCALE ANALYSIS]</scope>
    <source>
        <tissue>Leukemic T-cell</tissue>
    </source>
</reference>
<reference key="10">
    <citation type="journal article" date="2010" name="Sci. Signal.">
        <title>Quantitative phosphoproteomics reveals widespread full phosphorylation site occupancy during mitosis.</title>
        <authorList>
            <person name="Olsen J.V."/>
            <person name="Vermeulen M."/>
            <person name="Santamaria A."/>
            <person name="Kumar C."/>
            <person name="Miller M.L."/>
            <person name="Jensen L.J."/>
            <person name="Gnad F."/>
            <person name="Cox J."/>
            <person name="Jensen T.S."/>
            <person name="Nigg E.A."/>
            <person name="Brunak S."/>
            <person name="Mann M."/>
        </authorList>
    </citation>
    <scope>PHOSPHORYLATION [LARGE SCALE ANALYSIS] AT SER-64; SER-118; SER-140; SER-142; SER-174 AND SER-295</scope>
    <scope>IDENTIFICATION BY MASS SPECTROMETRY [LARGE SCALE ANALYSIS]</scope>
    <source>
        <tissue>Cervix carcinoma</tissue>
    </source>
</reference>
<reference key="11">
    <citation type="journal article" date="2013" name="J. Proteome Res.">
        <title>Toward a comprehensive characterization of a human cancer cell phosphoproteome.</title>
        <authorList>
            <person name="Zhou H."/>
            <person name="Di Palma S."/>
            <person name="Preisinger C."/>
            <person name="Peng M."/>
            <person name="Polat A.N."/>
            <person name="Heck A.J."/>
            <person name="Mohammed S."/>
        </authorList>
    </citation>
    <scope>PHOSPHORYLATION [LARGE SCALE ANALYSIS] AT SER-64; SER-105; SER-109; SER-118; SER-138 AND SER-142</scope>
    <scope>IDENTIFICATION BY MASS SPECTROMETRY [LARGE SCALE ANALYSIS]</scope>
    <source>
        <tissue>Cervix carcinoma</tissue>
        <tissue>Erythroleukemia</tissue>
    </source>
</reference>
<reference key="12">
    <citation type="journal article" date="2014" name="J. Proteomics">
        <title>An enzyme assisted RP-RPLC approach for in-depth analysis of human liver phosphoproteome.</title>
        <authorList>
            <person name="Bian Y."/>
            <person name="Song C."/>
            <person name="Cheng K."/>
            <person name="Dong M."/>
            <person name="Wang F."/>
            <person name="Huang J."/>
            <person name="Sun D."/>
            <person name="Wang L."/>
            <person name="Ye M."/>
            <person name="Zou H."/>
        </authorList>
    </citation>
    <scope>PHOSPHORYLATION [LARGE SCALE ANALYSIS] AT SER-64 AND SER-174</scope>
    <scope>IDENTIFICATION BY MASS SPECTROMETRY [LARGE SCALE ANALYSIS]</scope>
    <source>
        <tissue>Liver</tissue>
    </source>
</reference>
<reference key="13">
    <citation type="journal article" date="2014" name="Mol. Cell. Proteomics">
        <title>Immunoaffinity enrichment and mass spectrometry analysis of protein methylation.</title>
        <authorList>
            <person name="Guo A."/>
            <person name="Gu H."/>
            <person name="Zhou J."/>
            <person name="Mulhern D."/>
            <person name="Wang Y."/>
            <person name="Lee K.A."/>
            <person name="Yang V."/>
            <person name="Aguiar M."/>
            <person name="Kornhauser J."/>
            <person name="Jia X."/>
            <person name="Ren J."/>
            <person name="Beausoleil S.A."/>
            <person name="Silva J.C."/>
            <person name="Vemulapalli V."/>
            <person name="Bedford M.T."/>
            <person name="Comb M.J."/>
        </authorList>
    </citation>
    <scope>METHYLATION [LARGE SCALE ANALYSIS] AT LYS-5</scope>
    <scope>IDENTIFICATION BY MASS SPECTROMETRY [LARGE SCALE ANALYSIS]</scope>
    <source>
        <tissue>Colon carcinoma</tissue>
    </source>
</reference>
<gene>
    <name type="primary">CDC42EP4</name>
    <name type="synonym">BORG4</name>
    <name type="synonym">CEP4</name>
</gene>
<protein>
    <recommendedName>
        <fullName>Cdc42 effector protein 4</fullName>
    </recommendedName>
    <alternativeName>
        <fullName>Binder of Rho GTPases 4</fullName>
    </alternativeName>
</protein>
<dbReference type="EMBL" id="AB042237">
    <property type="protein sequence ID" value="BAB17272.1"/>
    <property type="molecule type" value="mRNA"/>
</dbReference>
<dbReference type="EMBL" id="AF099664">
    <property type="protein sequence ID" value="AAD16299.1"/>
    <property type="molecule type" value="mRNA"/>
</dbReference>
<dbReference type="EMBL" id="AK097835">
    <property type="protein sequence ID" value="BAG53539.1"/>
    <property type="molecule type" value="mRNA"/>
</dbReference>
<dbReference type="EMBL" id="AC087301">
    <property type="status" value="NOT_ANNOTATED_CDS"/>
    <property type="molecule type" value="Genomic_DNA"/>
</dbReference>
<dbReference type="EMBL" id="BC002774">
    <property type="protein sequence ID" value="AAH02774.1"/>
    <property type="molecule type" value="mRNA"/>
</dbReference>
<dbReference type="EMBL" id="BC010451">
    <property type="protein sequence ID" value="AAH10451.1"/>
    <property type="molecule type" value="mRNA"/>
</dbReference>
<dbReference type="CCDS" id="CCDS11695.1">
    <molecule id="Q9H3Q1-1"/>
</dbReference>
<dbReference type="RefSeq" id="NP_036253.2">
    <molecule id="Q9H3Q1-1"/>
    <property type="nucleotide sequence ID" value="NM_012121.4"/>
</dbReference>
<dbReference type="RefSeq" id="XP_005257239.1">
    <molecule id="Q9H3Q1-1"/>
    <property type="nucleotide sequence ID" value="XM_005257182.3"/>
</dbReference>
<dbReference type="RefSeq" id="XP_054171610.1">
    <molecule id="Q9H3Q1-1"/>
    <property type="nucleotide sequence ID" value="XM_054315635.1"/>
</dbReference>
<dbReference type="BioGRID" id="117115">
    <property type="interactions" value="95"/>
</dbReference>
<dbReference type="FunCoup" id="Q9H3Q1">
    <property type="interactions" value="551"/>
</dbReference>
<dbReference type="IntAct" id="Q9H3Q1">
    <property type="interactions" value="51"/>
</dbReference>
<dbReference type="MINT" id="Q9H3Q1"/>
<dbReference type="STRING" id="9606.ENSP00000338258"/>
<dbReference type="GlyGen" id="Q9H3Q1">
    <property type="glycosylation" value="1 site, 1 O-linked glycan (1 site)"/>
</dbReference>
<dbReference type="iPTMnet" id="Q9H3Q1"/>
<dbReference type="PhosphoSitePlus" id="Q9H3Q1"/>
<dbReference type="SwissPalm" id="Q9H3Q1"/>
<dbReference type="BioMuta" id="CDC42EP4"/>
<dbReference type="DMDM" id="21362403"/>
<dbReference type="jPOST" id="Q9H3Q1"/>
<dbReference type="MassIVE" id="Q9H3Q1"/>
<dbReference type="PaxDb" id="9606-ENSP00000338258"/>
<dbReference type="PeptideAtlas" id="Q9H3Q1"/>
<dbReference type="ProteomicsDB" id="3730"/>
<dbReference type="ProteomicsDB" id="80739">
    <molecule id="Q9H3Q1-1"/>
</dbReference>
<dbReference type="Pumba" id="Q9H3Q1"/>
<dbReference type="Antibodypedia" id="31920">
    <property type="antibodies" value="164 antibodies from 29 providers"/>
</dbReference>
<dbReference type="DNASU" id="23580"/>
<dbReference type="Ensembl" id="ENST00000335793.4">
    <molecule id="Q9H3Q1-1"/>
    <property type="protein sequence ID" value="ENSP00000338258.3"/>
    <property type="gene ID" value="ENSG00000179604.10"/>
</dbReference>
<dbReference type="Ensembl" id="ENST00000439510.2">
    <molecule id="Q9H3Q1-2"/>
    <property type="protein sequence ID" value="ENSP00000404270.2"/>
    <property type="gene ID" value="ENSG00000179604.10"/>
</dbReference>
<dbReference type="GeneID" id="23580"/>
<dbReference type="KEGG" id="hsa:23580"/>
<dbReference type="MANE-Select" id="ENST00000335793.4">
    <property type="protein sequence ID" value="ENSP00000338258.3"/>
    <property type="RefSeq nucleotide sequence ID" value="NM_012121.5"/>
    <property type="RefSeq protein sequence ID" value="NP_036253.2"/>
</dbReference>
<dbReference type="UCSC" id="uc002jjo.4">
    <molecule id="Q9H3Q1-1"/>
    <property type="organism name" value="human"/>
</dbReference>
<dbReference type="AGR" id="HGNC:17147"/>
<dbReference type="CTD" id="23580"/>
<dbReference type="DisGeNET" id="23580"/>
<dbReference type="GeneCards" id="CDC42EP4"/>
<dbReference type="HGNC" id="HGNC:17147">
    <property type="gene designation" value="CDC42EP4"/>
</dbReference>
<dbReference type="HPA" id="ENSG00000179604">
    <property type="expression patterns" value="Low tissue specificity"/>
</dbReference>
<dbReference type="MIM" id="605468">
    <property type="type" value="gene"/>
</dbReference>
<dbReference type="neXtProt" id="NX_Q9H3Q1"/>
<dbReference type="OpenTargets" id="ENSG00000179604"/>
<dbReference type="PharmGKB" id="PA38439"/>
<dbReference type="VEuPathDB" id="HostDB:ENSG00000179604"/>
<dbReference type="eggNOG" id="ENOG502QRD6">
    <property type="taxonomic scope" value="Eukaryota"/>
</dbReference>
<dbReference type="GeneTree" id="ENSGT00940000161435"/>
<dbReference type="HOGENOM" id="CLU_067835_0_0_1"/>
<dbReference type="InParanoid" id="Q9H3Q1"/>
<dbReference type="OMA" id="DKYEYNM"/>
<dbReference type="OrthoDB" id="8898624at2759"/>
<dbReference type="PAN-GO" id="Q9H3Q1">
    <property type="GO annotations" value="7 GO annotations based on evolutionary models"/>
</dbReference>
<dbReference type="PhylomeDB" id="Q9H3Q1"/>
<dbReference type="TreeFam" id="TF331725"/>
<dbReference type="PathwayCommons" id="Q9H3Q1"/>
<dbReference type="Reactome" id="R-HSA-9013148">
    <property type="pathway name" value="CDC42 GTPase cycle"/>
</dbReference>
<dbReference type="Reactome" id="R-HSA-9013149">
    <property type="pathway name" value="RAC1 GTPase cycle"/>
</dbReference>
<dbReference type="Reactome" id="R-HSA-9013404">
    <property type="pathway name" value="RAC2 GTPase cycle"/>
</dbReference>
<dbReference type="Reactome" id="R-HSA-9013406">
    <property type="pathway name" value="RHOQ GTPase cycle"/>
</dbReference>
<dbReference type="SignaLink" id="Q9H3Q1"/>
<dbReference type="SIGNOR" id="Q9H3Q1"/>
<dbReference type="BioGRID-ORCS" id="23580">
    <property type="hits" value="18 hits in 1156 CRISPR screens"/>
</dbReference>
<dbReference type="CD-CODE" id="FB4E32DD">
    <property type="entry name" value="Presynaptic clusters and postsynaptic densities"/>
</dbReference>
<dbReference type="ChiTaRS" id="CDC42EP4">
    <property type="organism name" value="human"/>
</dbReference>
<dbReference type="GeneWiki" id="CDC42EP4"/>
<dbReference type="GenomeRNAi" id="23580"/>
<dbReference type="Pharos" id="Q9H3Q1">
    <property type="development level" value="Tbio"/>
</dbReference>
<dbReference type="PRO" id="PR:Q9H3Q1"/>
<dbReference type="Proteomes" id="UP000005640">
    <property type="component" value="Chromosome 17"/>
</dbReference>
<dbReference type="RNAct" id="Q9H3Q1">
    <property type="molecule type" value="protein"/>
</dbReference>
<dbReference type="Bgee" id="ENSG00000179604">
    <property type="expression patterns" value="Expressed in cranial nerve II and 211 other cell types or tissues"/>
</dbReference>
<dbReference type="ExpressionAtlas" id="Q9H3Q1">
    <property type="expression patterns" value="baseline and differential"/>
</dbReference>
<dbReference type="GO" id="GO:0015629">
    <property type="term" value="C:actin cytoskeleton"/>
    <property type="evidence" value="ECO:0000314"/>
    <property type="project" value="HPA"/>
</dbReference>
<dbReference type="GO" id="GO:0005912">
    <property type="term" value="C:adherens junction"/>
    <property type="evidence" value="ECO:0000314"/>
    <property type="project" value="BHF-UCL"/>
</dbReference>
<dbReference type="GO" id="GO:0005737">
    <property type="term" value="C:cytoplasm"/>
    <property type="evidence" value="ECO:0000318"/>
    <property type="project" value="GO_Central"/>
</dbReference>
<dbReference type="GO" id="GO:0005856">
    <property type="term" value="C:cytoskeleton"/>
    <property type="evidence" value="ECO:0000318"/>
    <property type="project" value="GO_Central"/>
</dbReference>
<dbReference type="GO" id="GO:0005829">
    <property type="term" value="C:cytosol"/>
    <property type="evidence" value="ECO:0000304"/>
    <property type="project" value="Reactome"/>
</dbReference>
<dbReference type="GO" id="GO:0012505">
    <property type="term" value="C:endomembrane system"/>
    <property type="evidence" value="ECO:0007669"/>
    <property type="project" value="UniProtKB-SubCell"/>
</dbReference>
<dbReference type="GO" id="GO:0015630">
    <property type="term" value="C:microtubule cytoskeleton"/>
    <property type="evidence" value="ECO:0000314"/>
    <property type="project" value="HPA"/>
</dbReference>
<dbReference type="GO" id="GO:0045335">
    <property type="term" value="C:phagocytic vesicle"/>
    <property type="evidence" value="ECO:0007669"/>
    <property type="project" value="Ensembl"/>
</dbReference>
<dbReference type="GO" id="GO:0005886">
    <property type="term" value="C:plasma membrane"/>
    <property type="evidence" value="ECO:0000314"/>
    <property type="project" value="HPA"/>
</dbReference>
<dbReference type="GO" id="GO:0003723">
    <property type="term" value="F:RNA binding"/>
    <property type="evidence" value="ECO:0007005"/>
    <property type="project" value="UniProtKB"/>
</dbReference>
<dbReference type="GO" id="GO:0031267">
    <property type="term" value="F:small GTPase binding"/>
    <property type="evidence" value="ECO:0000318"/>
    <property type="project" value="GO_Central"/>
</dbReference>
<dbReference type="GO" id="GO:0071346">
    <property type="term" value="P:cellular response to type II interferon"/>
    <property type="evidence" value="ECO:0007669"/>
    <property type="project" value="Ensembl"/>
</dbReference>
<dbReference type="GO" id="GO:0030838">
    <property type="term" value="P:positive regulation of actin filament polymerization"/>
    <property type="evidence" value="ECO:0000318"/>
    <property type="project" value="GO_Central"/>
</dbReference>
<dbReference type="GO" id="GO:0031274">
    <property type="term" value="P:positive regulation of pseudopodium assembly"/>
    <property type="evidence" value="ECO:0000314"/>
    <property type="project" value="UniProtKB"/>
</dbReference>
<dbReference type="GO" id="GO:0008360">
    <property type="term" value="P:regulation of cell shape"/>
    <property type="evidence" value="ECO:0000314"/>
    <property type="project" value="UniProtKB"/>
</dbReference>
<dbReference type="GO" id="GO:0007266">
    <property type="term" value="P:Rho protein signal transduction"/>
    <property type="evidence" value="ECO:0000318"/>
    <property type="project" value="GO_Central"/>
</dbReference>
<dbReference type="InterPro" id="IPR029273">
    <property type="entry name" value="Cdc42_effect-like"/>
</dbReference>
<dbReference type="InterPro" id="IPR051296">
    <property type="entry name" value="Cdc42_Effector_BORG/CEP"/>
</dbReference>
<dbReference type="InterPro" id="IPR000095">
    <property type="entry name" value="CRIB_dom"/>
</dbReference>
<dbReference type="PANTHER" id="PTHR15344:SF14">
    <property type="entry name" value="CDC42 EFFECTOR PROTEIN 4"/>
    <property type="match status" value="1"/>
</dbReference>
<dbReference type="PANTHER" id="PTHR15344">
    <property type="entry name" value="CDC42 EFFECTOR PROTEIN BORG"/>
    <property type="match status" value="1"/>
</dbReference>
<dbReference type="Pfam" id="PF14957">
    <property type="entry name" value="BORG_CEP"/>
    <property type="match status" value="1"/>
</dbReference>
<dbReference type="Pfam" id="PF00786">
    <property type="entry name" value="PBD"/>
    <property type="match status" value="1"/>
</dbReference>
<dbReference type="SMART" id="SM00285">
    <property type="entry name" value="PBD"/>
    <property type="match status" value="1"/>
</dbReference>
<dbReference type="PROSITE" id="PS50108">
    <property type="entry name" value="CRIB"/>
    <property type="match status" value="1"/>
</dbReference>
<sequence length="356" mass="37980">MPILKQLVSSSVHSKRRSRADLTAEMISAPLGDFRHTMHVGRAGDAFGDTSFLNSKAGEPDGESLDEQPSSSSSKRSLLSRKFRGSKRSQSVTRGEREQRDMLGSLRDSALFVKNAMSLPQLNEKEAAEKGTSKLPKSLSSSPVKKANDGEGGDEEAGTEEAVPRRNGAAGPHSPDPLLDEQAFGDLTDLPVVPKATYGLKHAESIMSFHIDLGPSMLGDVLSIMDKEEWDPEEGEGGYHGDEGAAGTITQAPPYAVAAPPLARQEGKAGPDLPSLPSHALEDEGWAAAAPSPGSARSMGSHTTRDSSSLSSCTSGILEERSPAFRGPDRARAAVSRQPDKEFSFMDEEEEDEIRV</sequence>
<feature type="chain" id="PRO_0000212655" description="Cdc42 effector protein 4">
    <location>
        <begin position="1"/>
        <end position="356"/>
    </location>
</feature>
<feature type="domain" description="CRIB" evidence="3">
    <location>
        <begin position="27"/>
        <end position="41"/>
    </location>
</feature>
<feature type="region of interest" description="Disordered" evidence="4">
    <location>
        <begin position="51"/>
        <end position="102"/>
    </location>
</feature>
<feature type="region of interest" description="Disordered" evidence="4">
    <location>
        <begin position="122"/>
        <end position="182"/>
    </location>
</feature>
<feature type="region of interest" description="Disordered" evidence="4">
    <location>
        <begin position="257"/>
        <end position="356"/>
    </location>
</feature>
<feature type="compositionally biased region" description="Basic residues" evidence="4">
    <location>
        <begin position="78"/>
        <end position="87"/>
    </location>
</feature>
<feature type="compositionally biased region" description="Basic and acidic residues" evidence="4">
    <location>
        <begin position="123"/>
        <end position="132"/>
    </location>
</feature>
<feature type="compositionally biased region" description="Low complexity" evidence="4">
    <location>
        <begin position="133"/>
        <end position="143"/>
    </location>
</feature>
<feature type="compositionally biased region" description="Low complexity" evidence="4">
    <location>
        <begin position="287"/>
        <end position="315"/>
    </location>
</feature>
<feature type="compositionally biased region" description="Basic and acidic residues" evidence="4">
    <location>
        <begin position="318"/>
        <end position="344"/>
    </location>
</feature>
<feature type="compositionally biased region" description="Acidic residues" evidence="4">
    <location>
        <begin position="345"/>
        <end position="356"/>
    </location>
</feature>
<feature type="modified residue" description="N6-methyllysine" evidence="11">
    <location>
        <position position="5"/>
    </location>
</feature>
<feature type="modified residue" description="Phosphoserine" evidence="2">
    <location>
        <position position="18"/>
    </location>
</feature>
<feature type="modified residue" description="Phosphoserine" evidence="8 9 10 12">
    <location>
        <position position="64"/>
    </location>
</feature>
<feature type="modified residue" description="Phosphoserine" evidence="10">
    <location>
        <position position="105"/>
    </location>
</feature>
<feature type="modified residue" description="Phosphoserine" evidence="10">
    <location>
        <position position="109"/>
    </location>
</feature>
<feature type="modified residue" description="Phosphoserine" evidence="9 10">
    <location>
        <position position="118"/>
    </location>
</feature>
<feature type="modified residue" description="Phosphoserine" evidence="8 10">
    <location>
        <position position="138"/>
    </location>
</feature>
<feature type="modified residue" description="Phosphoserine" evidence="9">
    <location>
        <position position="140"/>
    </location>
</feature>
<feature type="modified residue" description="Phosphoserine" evidence="9 10">
    <location>
        <position position="142"/>
    </location>
</feature>
<feature type="modified residue" description="Phosphoserine" evidence="7 8 9 12">
    <location>
        <position position="174"/>
    </location>
</feature>
<feature type="modified residue" description="Phosphoserine" evidence="7 8">
    <location>
        <position position="292"/>
    </location>
</feature>
<feature type="modified residue" description="Phosphoserine" evidence="7 8 9">
    <location>
        <position position="295"/>
    </location>
</feature>
<feature type="splice variant" id="VSP_055544" description="In isoform 2." evidence="5">
    <location>
        <begin position="57"/>
        <end position="126"/>
    </location>
</feature>
<feature type="sequence conflict" description="In Ref. 5; AAH10451." evidence="6" ref="5">
    <original>P</original>
    <variation>L</variation>
    <location>
        <position position="2"/>
    </location>
</feature>
<feature type="sequence conflict" description="In Ref. 2; AAD16299." evidence="6" ref="2">
    <original>D</original>
    <variation>T</variation>
    <location>
        <position position="33"/>
    </location>
</feature>
<feature type="sequence conflict" description="In Ref. 2; AAD16299." evidence="6" ref="2">
    <original>A</original>
    <variation>T</variation>
    <location>
        <position position="288"/>
    </location>
</feature>
<feature type="sequence conflict" description="In Ref. 2; AAD16299." evidence="6" ref="2">
    <original>A</original>
    <variation>T</variation>
    <location>
        <position position="296"/>
    </location>
</feature>
<feature type="sequence conflict" description="In Ref. 2; AAD16299." evidence="6" ref="2">
    <original>P</original>
    <variation>PP</variation>
    <location>
        <position position="339"/>
    </location>
</feature>
<feature type="sequence conflict" description="In Ref. 2; AAD16299." evidence="6" ref="2">
    <location>
        <position position="355"/>
    </location>
</feature>
<keyword id="KW-0025">Alternative splicing</keyword>
<keyword id="KW-0133">Cell shape</keyword>
<keyword id="KW-0963">Cytoplasm</keyword>
<keyword id="KW-0206">Cytoskeleton</keyword>
<keyword id="KW-0472">Membrane</keyword>
<keyword id="KW-0488">Methylation</keyword>
<keyword id="KW-0597">Phosphoprotein</keyword>
<keyword id="KW-1267">Proteomics identification</keyword>
<keyword id="KW-1185">Reference proteome</keyword>
<organism>
    <name type="scientific">Homo sapiens</name>
    <name type="common">Human</name>
    <dbReference type="NCBI Taxonomy" id="9606"/>
    <lineage>
        <taxon>Eukaryota</taxon>
        <taxon>Metazoa</taxon>
        <taxon>Chordata</taxon>
        <taxon>Craniata</taxon>
        <taxon>Vertebrata</taxon>
        <taxon>Euteleostomi</taxon>
        <taxon>Mammalia</taxon>
        <taxon>Eutheria</taxon>
        <taxon>Euarchontoglires</taxon>
        <taxon>Primates</taxon>
        <taxon>Haplorrhini</taxon>
        <taxon>Catarrhini</taxon>
        <taxon>Hominidae</taxon>
        <taxon>Homo</taxon>
    </lineage>
</organism>
<name>BORG4_HUMAN</name>
<accession>Q9H3Q1</accession>
<accession>B3KUS7</accession>
<accession>O95828</accession>
<accession>Q96FT3</accession>
<proteinExistence type="evidence at protein level"/>
<comment type="function">
    <text>Probably involved in the organization of the actin cytoskeleton. May act downstream of CDC42 to induce actin filament assembly leading to cell shape changes. Induces pseudopodia formation, when overexpressed in fibroblasts.</text>
</comment>
<comment type="subunit">
    <text evidence="1">Interacts with CDC42 and RHOQ, in a GTP-dependent manner.</text>
</comment>
<comment type="interaction">
    <interactant intactId="EBI-744665">
        <id>Q9H3Q1</id>
    </interactant>
    <interactant intactId="EBI-10175124">
        <id>Q8IZU0</id>
        <label>FAM9B</label>
    </interactant>
    <organismsDiffer>false</organismsDiffer>
    <experiments>5</experiments>
</comment>
<comment type="interaction">
    <interactant intactId="EBI-744665">
        <id>Q9H3Q1</id>
    </interactant>
    <interactant intactId="EBI-466029">
        <id>P42858</id>
        <label>HTT</label>
    </interactant>
    <organismsDiffer>false</organismsDiffer>
    <experiments>3</experiments>
</comment>
<comment type="subcellular location">
    <subcellularLocation>
        <location>Endomembrane system</location>
        <topology>Peripheral membrane protein</topology>
    </subcellularLocation>
    <subcellularLocation>
        <location>Cytoplasm</location>
        <location>Cytoskeleton</location>
    </subcellularLocation>
</comment>
<comment type="alternative products">
    <event type="alternative splicing"/>
    <isoform>
        <id>Q9H3Q1-1</id>
        <name>1</name>
        <sequence type="displayed"/>
    </isoform>
    <isoform>
        <id>Q9H3Q1-2</id>
        <name>2</name>
        <sequence type="described" ref="VSP_055544"/>
    </isoform>
</comment>
<comment type="tissue specificity">
    <text>Not detected in any of the adult tissues tested. May be expressed only in fetal or embryonic tissues.</text>
</comment>
<comment type="similarity">
    <text evidence="6">Belongs to the BORG/CEP family.</text>
</comment>